<name>Y3086_XANE5</name>
<evidence type="ECO:0000255" key="1">
    <source>
        <dbReference type="HAMAP-Rule" id="MF_00657"/>
    </source>
</evidence>
<gene>
    <name type="ordered locus">XCV3086</name>
</gene>
<sequence>MLLPIPDVLSPAQLSQLRAQLDVADWADGRITAGHQSAQAKDNAQLPEDSAVAREAGALVLEALARSSTFFSAVLPRRIYPPLFNRYSGGQSFGYHVDNAIRYDRSRGGADPVRTDVSATLFLSDPDSYDGGELVIEDTYGTQSVKLPAGHLVIYPGTSLHRVMPVTRGARVACFFWTQSMLRDAAQRRLLFELDVSIRRLTQDTPGHPSLIQLTGVYHNLLRQWADV</sequence>
<protein>
    <recommendedName>
        <fullName evidence="1">PKHD-type hydroxylase XCV3086</fullName>
        <ecNumber evidence="1">1.14.11.-</ecNumber>
    </recommendedName>
</protein>
<reference key="1">
    <citation type="journal article" date="2005" name="J. Bacteriol.">
        <title>Insights into genome plasticity and pathogenicity of the plant pathogenic Bacterium Xanthomonas campestris pv. vesicatoria revealed by the complete genome sequence.</title>
        <authorList>
            <person name="Thieme F."/>
            <person name="Koebnik R."/>
            <person name="Bekel T."/>
            <person name="Berger C."/>
            <person name="Boch J."/>
            <person name="Buettner D."/>
            <person name="Caldana C."/>
            <person name="Gaigalat L."/>
            <person name="Goesmann A."/>
            <person name="Kay S."/>
            <person name="Kirchner O."/>
            <person name="Lanz C."/>
            <person name="Linke B."/>
            <person name="McHardy A.C."/>
            <person name="Meyer F."/>
            <person name="Mittenhuber G."/>
            <person name="Nies D.H."/>
            <person name="Niesbach-Kloesgen U."/>
            <person name="Patschkowski T."/>
            <person name="Rueckert C."/>
            <person name="Rupp O."/>
            <person name="Schneiker S."/>
            <person name="Schuster S.C."/>
            <person name="Vorhoelter F.J."/>
            <person name="Weber E."/>
            <person name="Puehler A."/>
            <person name="Bonas U."/>
            <person name="Bartels D."/>
            <person name="Kaiser O."/>
        </authorList>
    </citation>
    <scope>NUCLEOTIDE SEQUENCE [LARGE SCALE GENOMIC DNA]</scope>
    <source>
        <strain>85-10</strain>
    </source>
</reference>
<dbReference type="EC" id="1.14.11.-" evidence="1"/>
<dbReference type="EMBL" id="AM039952">
    <property type="protein sequence ID" value="CAJ24817.1"/>
    <property type="molecule type" value="Genomic_DNA"/>
</dbReference>
<dbReference type="RefSeq" id="WP_011348122.1">
    <property type="nucleotide sequence ID" value="NZ_CP017190.1"/>
</dbReference>
<dbReference type="SMR" id="Q3BQZ6"/>
<dbReference type="STRING" id="456327.BJD11_07390"/>
<dbReference type="KEGG" id="xcv:XCV3086"/>
<dbReference type="eggNOG" id="COG3128">
    <property type="taxonomic scope" value="Bacteria"/>
</dbReference>
<dbReference type="HOGENOM" id="CLU_106663_0_0_6"/>
<dbReference type="Proteomes" id="UP000007069">
    <property type="component" value="Chromosome"/>
</dbReference>
<dbReference type="GO" id="GO:0016706">
    <property type="term" value="F:2-oxoglutarate-dependent dioxygenase activity"/>
    <property type="evidence" value="ECO:0007669"/>
    <property type="project" value="UniProtKB-UniRule"/>
</dbReference>
<dbReference type="GO" id="GO:0005506">
    <property type="term" value="F:iron ion binding"/>
    <property type="evidence" value="ECO:0007669"/>
    <property type="project" value="UniProtKB-UniRule"/>
</dbReference>
<dbReference type="GO" id="GO:0031418">
    <property type="term" value="F:L-ascorbic acid binding"/>
    <property type="evidence" value="ECO:0007669"/>
    <property type="project" value="UniProtKB-KW"/>
</dbReference>
<dbReference type="GO" id="GO:0006974">
    <property type="term" value="P:DNA damage response"/>
    <property type="evidence" value="ECO:0007669"/>
    <property type="project" value="TreeGrafter"/>
</dbReference>
<dbReference type="GO" id="GO:0006879">
    <property type="term" value="P:intracellular iron ion homeostasis"/>
    <property type="evidence" value="ECO:0007669"/>
    <property type="project" value="TreeGrafter"/>
</dbReference>
<dbReference type="FunFam" id="2.60.120.620:FF:000006">
    <property type="entry name" value="PKHD-type hydroxylase YbiX"/>
    <property type="match status" value="1"/>
</dbReference>
<dbReference type="Gene3D" id="2.60.120.620">
    <property type="entry name" value="q2cbj1_9rhob like domain"/>
    <property type="match status" value="1"/>
</dbReference>
<dbReference type="Gene3D" id="4.10.860.20">
    <property type="entry name" value="Rabenosyn, Rab binding domain"/>
    <property type="match status" value="1"/>
</dbReference>
<dbReference type="HAMAP" id="MF_00657">
    <property type="entry name" value="Hydroxyl_YbiX"/>
    <property type="match status" value="1"/>
</dbReference>
<dbReference type="InterPro" id="IPR005123">
    <property type="entry name" value="Oxoglu/Fe-dep_dioxygenase_dom"/>
</dbReference>
<dbReference type="InterPro" id="IPR041097">
    <property type="entry name" value="PKHD_C"/>
</dbReference>
<dbReference type="InterPro" id="IPR023550">
    <property type="entry name" value="PKHD_hydroxylase"/>
</dbReference>
<dbReference type="InterPro" id="IPR006620">
    <property type="entry name" value="Pro_4_hyd_alph"/>
</dbReference>
<dbReference type="InterPro" id="IPR044862">
    <property type="entry name" value="Pro_4_hyd_alph_FE2OG_OXY"/>
</dbReference>
<dbReference type="NCBIfam" id="NF003973">
    <property type="entry name" value="PRK05467.1-2"/>
    <property type="match status" value="1"/>
</dbReference>
<dbReference type="NCBIfam" id="NF003974">
    <property type="entry name" value="PRK05467.1-3"/>
    <property type="match status" value="1"/>
</dbReference>
<dbReference type="NCBIfam" id="NF003975">
    <property type="entry name" value="PRK05467.1-4"/>
    <property type="match status" value="1"/>
</dbReference>
<dbReference type="PANTHER" id="PTHR41536">
    <property type="entry name" value="PKHD-TYPE HYDROXYLASE YBIX"/>
    <property type="match status" value="1"/>
</dbReference>
<dbReference type="PANTHER" id="PTHR41536:SF1">
    <property type="entry name" value="PKHD-TYPE HYDROXYLASE YBIX"/>
    <property type="match status" value="1"/>
</dbReference>
<dbReference type="Pfam" id="PF13640">
    <property type="entry name" value="2OG-FeII_Oxy_3"/>
    <property type="match status" value="1"/>
</dbReference>
<dbReference type="Pfam" id="PF18331">
    <property type="entry name" value="PKHD_C"/>
    <property type="match status" value="1"/>
</dbReference>
<dbReference type="SMART" id="SM00702">
    <property type="entry name" value="P4Hc"/>
    <property type="match status" value="1"/>
</dbReference>
<dbReference type="SUPFAM" id="SSF51197">
    <property type="entry name" value="Clavaminate synthase-like"/>
    <property type="match status" value="1"/>
</dbReference>
<dbReference type="PROSITE" id="PS51471">
    <property type="entry name" value="FE2OG_OXY"/>
    <property type="match status" value="1"/>
</dbReference>
<accession>Q3BQZ6</accession>
<organism>
    <name type="scientific">Xanthomonas euvesicatoria pv. vesicatoria (strain 85-10)</name>
    <name type="common">Xanthomonas campestris pv. vesicatoria</name>
    <dbReference type="NCBI Taxonomy" id="316273"/>
    <lineage>
        <taxon>Bacteria</taxon>
        <taxon>Pseudomonadati</taxon>
        <taxon>Pseudomonadota</taxon>
        <taxon>Gammaproteobacteria</taxon>
        <taxon>Lysobacterales</taxon>
        <taxon>Lysobacteraceae</taxon>
        <taxon>Xanthomonas</taxon>
    </lineage>
</organism>
<comment type="cofactor">
    <cofactor evidence="1">
        <name>Fe(2+)</name>
        <dbReference type="ChEBI" id="CHEBI:29033"/>
    </cofactor>
    <text evidence="1">Binds 1 Fe(2+) ion per subunit.</text>
</comment>
<comment type="cofactor">
    <cofactor evidence="1">
        <name>L-ascorbate</name>
        <dbReference type="ChEBI" id="CHEBI:38290"/>
    </cofactor>
</comment>
<proteinExistence type="inferred from homology"/>
<keyword id="KW-0223">Dioxygenase</keyword>
<keyword id="KW-0408">Iron</keyword>
<keyword id="KW-0479">Metal-binding</keyword>
<keyword id="KW-0560">Oxidoreductase</keyword>
<keyword id="KW-0847">Vitamin C</keyword>
<feature type="chain" id="PRO_1000061746" description="PKHD-type hydroxylase XCV3086">
    <location>
        <begin position="1"/>
        <end position="228"/>
    </location>
</feature>
<feature type="domain" description="Fe2OG dioxygenase" evidence="1">
    <location>
        <begin position="78"/>
        <end position="180"/>
    </location>
</feature>
<feature type="binding site" evidence="1">
    <location>
        <position position="96"/>
    </location>
    <ligand>
        <name>Fe cation</name>
        <dbReference type="ChEBI" id="CHEBI:24875"/>
    </ligand>
</feature>
<feature type="binding site" evidence="1">
    <location>
        <position position="98"/>
    </location>
    <ligand>
        <name>Fe cation</name>
        <dbReference type="ChEBI" id="CHEBI:24875"/>
    </ligand>
</feature>
<feature type="binding site" evidence="1">
    <location>
        <position position="161"/>
    </location>
    <ligand>
        <name>Fe cation</name>
        <dbReference type="ChEBI" id="CHEBI:24875"/>
    </ligand>
</feature>
<feature type="binding site" evidence="1">
    <location>
        <position position="171"/>
    </location>
    <ligand>
        <name>2-oxoglutarate</name>
        <dbReference type="ChEBI" id="CHEBI:16810"/>
    </ligand>
</feature>